<evidence type="ECO:0000269" key="1">
    <source>
    </source>
</evidence>
<evidence type="ECO:0000303" key="2">
    <source>
    </source>
</evidence>
<keyword id="KW-0903">Direct protein sequencing</keyword>
<proteinExistence type="evidence at protein level"/>
<comment type="tissue specificity">
    <text evidence="1">Nacreous layer of shell.</text>
</comment>
<sequence>NSTMDSLLQLGR</sequence>
<feature type="chain" id="PRO_0000371472" description="Uncharacterized protein IMPP11">
    <location>
        <begin position="1" status="less than"/>
        <end position="12" status="greater than"/>
    </location>
</feature>
<feature type="unsure residue" description="L or I" evidence="1">
    <location>
        <position position="7"/>
    </location>
</feature>
<feature type="unsure residue" description="L or I" evidence="1">
    <location>
        <position position="8"/>
    </location>
</feature>
<feature type="unsure residue" description="L or I" evidence="1">
    <location>
        <position position="10"/>
    </location>
</feature>
<feature type="non-terminal residue" evidence="2">
    <location>
        <position position="1"/>
    </location>
</feature>
<feature type="non-terminal residue" evidence="2">
    <location>
        <position position="12"/>
    </location>
</feature>
<organism>
    <name type="scientific">Nautilus macromphalus</name>
    <name type="common">Bellybutton nautilus</name>
    <dbReference type="NCBI Taxonomy" id="34576"/>
    <lineage>
        <taxon>Eukaryota</taxon>
        <taxon>Metazoa</taxon>
        <taxon>Spiralia</taxon>
        <taxon>Lophotrochozoa</taxon>
        <taxon>Mollusca</taxon>
        <taxon>Cephalopoda</taxon>
        <taxon>Nautiloidea</taxon>
        <taxon>Nautilida</taxon>
        <taxon>Nautilidae</taxon>
        <taxon>Nautilus</taxon>
    </lineage>
</organism>
<name>IMP11_NAUMA</name>
<reference key="1">
    <citation type="journal article" date="2009" name="ChemBioChem">
        <title>Evolution of nacre: biochemistry and 'shellomics' of the shell organic matrix of the cephalopod Nautilus macromphalus.</title>
        <authorList>
            <person name="Marie B."/>
            <person name="Marin F."/>
            <person name="Marie A."/>
            <person name="Bedouet L."/>
            <person name="Dubost L."/>
            <person name="Alcaraz G."/>
            <person name="Milet C."/>
            <person name="Luquet G."/>
        </authorList>
    </citation>
    <scope>PROTEIN SEQUENCE</scope>
    <scope>TISSUE SPECIFICITY</scope>
    <source>
        <tissue>Shell</tissue>
    </source>
</reference>
<protein>
    <recommendedName>
        <fullName evidence="2">Uncharacterized protein IMPP11</fullName>
    </recommendedName>
</protein>
<accession>P85370</accession>